<protein>
    <recommendedName>
        <fullName evidence="7">ALX homeobox protein 1</fullName>
    </recommendedName>
    <alternativeName>
        <fullName evidence="2">Cartilage homeoprotein 1</fullName>
        <shortName evidence="2">CART-1</shortName>
    </alternativeName>
</protein>
<dbReference type="EMBL" id="AKZB01051996">
    <property type="status" value="NOT_ANNOTATED_CDS"/>
    <property type="molecule type" value="Genomic_DNA"/>
</dbReference>
<dbReference type="EMBL" id="AKZB01051997">
    <property type="status" value="NOT_ANNOTATED_CDS"/>
    <property type="molecule type" value="Genomic_DNA"/>
</dbReference>
<dbReference type="RefSeq" id="XP_005421635.1">
    <property type="nucleotide sequence ID" value="XM_005421578.1"/>
</dbReference>
<dbReference type="SMR" id="P0DMV5"/>
<dbReference type="GeneID" id="102033603"/>
<dbReference type="KEGG" id="gfr:102033603"/>
<dbReference type="CTD" id="8092"/>
<dbReference type="InParanoid" id="P0DMV5"/>
<dbReference type="OrthoDB" id="6159439at2759"/>
<dbReference type="Proteomes" id="UP000504602">
    <property type="component" value="Unplaced"/>
</dbReference>
<dbReference type="GO" id="GO:0005794">
    <property type="term" value="C:Golgi apparatus"/>
    <property type="evidence" value="ECO:0007669"/>
    <property type="project" value="Ensembl"/>
</dbReference>
<dbReference type="GO" id="GO:0016604">
    <property type="term" value="C:nuclear body"/>
    <property type="evidence" value="ECO:0007669"/>
    <property type="project" value="Ensembl"/>
</dbReference>
<dbReference type="GO" id="GO:0005667">
    <property type="term" value="C:transcription regulator complex"/>
    <property type="evidence" value="ECO:0007669"/>
    <property type="project" value="Ensembl"/>
</dbReference>
<dbReference type="GO" id="GO:0001228">
    <property type="term" value="F:DNA-binding transcription activator activity, RNA polymerase II-specific"/>
    <property type="evidence" value="ECO:0007669"/>
    <property type="project" value="Ensembl"/>
</dbReference>
<dbReference type="GO" id="GO:0000977">
    <property type="term" value="F:RNA polymerase II transcription regulatory region sequence-specific DNA binding"/>
    <property type="evidence" value="ECO:0007669"/>
    <property type="project" value="Ensembl"/>
</dbReference>
<dbReference type="GO" id="GO:0009952">
    <property type="term" value="P:anterior/posterior pattern specification"/>
    <property type="evidence" value="ECO:0007669"/>
    <property type="project" value="Ensembl"/>
</dbReference>
<dbReference type="GO" id="GO:0030326">
    <property type="term" value="P:embryonic limb morphogenesis"/>
    <property type="evidence" value="ECO:0007669"/>
    <property type="project" value="Ensembl"/>
</dbReference>
<dbReference type="GO" id="GO:0048704">
    <property type="term" value="P:embryonic skeletal system morphogenesis"/>
    <property type="evidence" value="ECO:0007669"/>
    <property type="project" value="Ensembl"/>
</dbReference>
<dbReference type="GO" id="GO:0014031">
    <property type="term" value="P:mesenchymal cell development"/>
    <property type="evidence" value="ECO:0007669"/>
    <property type="project" value="Ensembl"/>
</dbReference>
<dbReference type="GO" id="GO:0000122">
    <property type="term" value="P:negative regulation of transcription by RNA polymerase II"/>
    <property type="evidence" value="ECO:0007669"/>
    <property type="project" value="Ensembl"/>
</dbReference>
<dbReference type="GO" id="GO:0001843">
    <property type="term" value="P:neural tube closure"/>
    <property type="evidence" value="ECO:0007669"/>
    <property type="project" value="Ensembl"/>
</dbReference>
<dbReference type="GO" id="GO:0010718">
    <property type="term" value="P:positive regulation of epithelial to mesenchymal transition"/>
    <property type="evidence" value="ECO:0007669"/>
    <property type="project" value="Ensembl"/>
</dbReference>
<dbReference type="GO" id="GO:0060021">
    <property type="term" value="P:roof of mouth development"/>
    <property type="evidence" value="ECO:0007669"/>
    <property type="project" value="Ensembl"/>
</dbReference>
<dbReference type="GO" id="GO:0048864">
    <property type="term" value="P:stem cell development"/>
    <property type="evidence" value="ECO:0007669"/>
    <property type="project" value="Ensembl"/>
</dbReference>
<dbReference type="CDD" id="cd00086">
    <property type="entry name" value="homeodomain"/>
    <property type="match status" value="1"/>
</dbReference>
<dbReference type="FunFam" id="1.10.10.60:FF:000093">
    <property type="entry name" value="ALX homeobox protein 1"/>
    <property type="match status" value="1"/>
</dbReference>
<dbReference type="Gene3D" id="1.10.10.60">
    <property type="entry name" value="Homeodomain-like"/>
    <property type="match status" value="1"/>
</dbReference>
<dbReference type="InterPro" id="IPR001356">
    <property type="entry name" value="HD"/>
</dbReference>
<dbReference type="InterPro" id="IPR017970">
    <property type="entry name" value="Homeobox_CS"/>
</dbReference>
<dbReference type="InterPro" id="IPR009057">
    <property type="entry name" value="Homeodomain-like_sf"/>
</dbReference>
<dbReference type="InterPro" id="IPR003654">
    <property type="entry name" value="OAR_dom"/>
</dbReference>
<dbReference type="InterPro" id="IPR050649">
    <property type="entry name" value="Paired_Homeobox_TFs"/>
</dbReference>
<dbReference type="PANTHER" id="PTHR24329:SF359">
    <property type="entry name" value="ALX HOMEOBOX PROTEIN 1"/>
    <property type="match status" value="1"/>
</dbReference>
<dbReference type="PANTHER" id="PTHR24329">
    <property type="entry name" value="HOMEOBOX PROTEIN ARISTALESS"/>
    <property type="match status" value="1"/>
</dbReference>
<dbReference type="Pfam" id="PF00046">
    <property type="entry name" value="Homeodomain"/>
    <property type="match status" value="1"/>
</dbReference>
<dbReference type="Pfam" id="PF03826">
    <property type="entry name" value="OAR"/>
    <property type="match status" value="1"/>
</dbReference>
<dbReference type="SMART" id="SM00389">
    <property type="entry name" value="HOX"/>
    <property type="match status" value="1"/>
</dbReference>
<dbReference type="SUPFAM" id="SSF46689">
    <property type="entry name" value="Homeodomain-like"/>
    <property type="match status" value="1"/>
</dbReference>
<dbReference type="PROSITE" id="PS00027">
    <property type="entry name" value="HOMEOBOX_1"/>
    <property type="match status" value="1"/>
</dbReference>
<dbReference type="PROSITE" id="PS50071">
    <property type="entry name" value="HOMEOBOX_2"/>
    <property type="match status" value="1"/>
</dbReference>
<dbReference type="PROSITE" id="PS50803">
    <property type="entry name" value="OAR"/>
    <property type="match status" value="1"/>
</dbReference>
<feature type="chain" id="PRO_0000433022" description="ALX homeobox protein 1">
    <location>
        <begin position="1"/>
        <end position="328"/>
    </location>
</feature>
<feature type="DNA-binding region" description="Homeobox" evidence="4">
    <location>
        <begin position="134"/>
        <end position="193"/>
    </location>
</feature>
<feature type="region of interest" description="Transactivation domain" evidence="2">
    <location>
        <begin position="194"/>
        <end position="328"/>
    </location>
</feature>
<feature type="short sequence motif" description="OAR" evidence="5">
    <location>
        <begin position="308"/>
        <end position="321"/>
    </location>
</feature>
<feature type="sequence variant" description="Associated with P haplotype." evidence="6">
    <original>P</original>
    <variation>L</variation>
    <location>
        <position position="112"/>
    </location>
</feature>
<feature type="sequence variant" description="Associated with P haplotype." evidence="6">
    <original>V</original>
    <variation>I</variation>
    <location>
        <position position="211"/>
    </location>
</feature>
<keyword id="KW-0010">Activator</keyword>
<keyword id="KW-0217">Developmental protein</keyword>
<keyword id="KW-0238">DNA-binding</keyword>
<keyword id="KW-0371">Homeobox</keyword>
<keyword id="KW-0539">Nucleus</keyword>
<keyword id="KW-1185">Reference proteome</keyword>
<keyword id="KW-0678">Repressor</keyword>
<keyword id="KW-0804">Transcription</keyword>
<keyword id="KW-0805">Transcription regulation</keyword>
<proteinExistence type="inferred from homology"/>
<sequence length="328" mass="37324">MIMDFLSEKFALKSQPSKNSDFYMGAGGSLEHVMETLDNESFYSKTSGSKCVQAFNPLQRAEHHVRLERTSPCQDTNVNYGITKVEGQPLHTELSRPMDNCNNLRMSPVKGPQEKGDLDELGDKCDSNVSSSKKRRHRTTFTSLQLEELEKVFQKTHYPDVYVREQLALRTELTEARVQVWFQNRRAKWRKRERYGQIQQAKSHFAATYDVSVLPRTDSYPQIQNNLWAGNAASGSVVTSCMLPRDTSSCMTPYSHSPRTDSGYTGFSNHQNQFSHMPLNNFFTDSLLSGATNGHAFETKPEFERRSSSIAVLRMKAKEHAANISWAM</sequence>
<accession>P0DMV5</accession>
<name>ALX1_GEOFO</name>
<comment type="function">
    <text evidence="1 6">Sequence-specific DNA-binding transcription factor that binds palindromic sequences within promoters and may activate or repress the transcription of a subset of genes. Most probably regulates the expression of genes involved in the development of mesenchyme-derived craniofacial structures (By similarity). May therefore play a role in beak development and regulate beak shape (PubMed:25686609).</text>
</comment>
<comment type="subunit">
    <text evidence="2">Binds DNA as a homodimer; required for transcriptional activation.</text>
</comment>
<comment type="subcellular location">
    <subcellularLocation>
        <location evidence="1">Nucleus</location>
    </subcellularLocation>
</comment>
<comment type="domain">
    <text evidence="2">The OAR motif may negatively regulate DNA-binding and therefore transcriptional activity. It is found in the C-terminal transactivation domain that stimulates transcription.</text>
</comment>
<comment type="polymorphism">
    <text evidence="6">Variations in ALX1 may play a key role in beak morphology. Two haplotypes for this gene are observed within the different species of finches. The B haplotype is almost exclusively found in individuals with a blunt beak while the P haplotype is neatly associated with individuals having a peaked beak. There are 335 fixed differences aggregated in the vicinity of the gene between B and P haplotypes including 2 missense mutations at positions 112 and 211. In the medium ground finch, Geospiza fortis which exhibits high intraspecies variation in beak shape, both haplotypes have been reported but a significant association with beak shape has also been observed. Finch beak morphology observed on the Galapagos Islands was used by Charles Darwin to formulate his theory of evolution.</text>
</comment>
<comment type="similarity">
    <text evidence="7">Belongs to the paired homeobox family.</text>
</comment>
<comment type="online information" name="Protein Spotlight">
    <link uri="https://www.proteinspotlight.org/back_issues/173/"/>
    <text>The makings of a face - Issue 173 of November 2015</text>
</comment>
<organism>
    <name type="scientific">Geospiza fortis</name>
    <name type="common">Medium ground-finch</name>
    <dbReference type="NCBI Taxonomy" id="48883"/>
    <lineage>
        <taxon>Eukaryota</taxon>
        <taxon>Metazoa</taxon>
        <taxon>Chordata</taxon>
        <taxon>Craniata</taxon>
        <taxon>Vertebrata</taxon>
        <taxon>Euteleostomi</taxon>
        <taxon>Archelosauria</taxon>
        <taxon>Archosauria</taxon>
        <taxon>Dinosauria</taxon>
        <taxon>Saurischia</taxon>
        <taxon>Theropoda</taxon>
        <taxon>Coelurosauria</taxon>
        <taxon>Aves</taxon>
        <taxon>Neognathae</taxon>
        <taxon>Neoaves</taxon>
        <taxon>Telluraves</taxon>
        <taxon>Australaves</taxon>
        <taxon>Passeriformes</taxon>
        <taxon>Thraupidae</taxon>
        <taxon>Geospiza</taxon>
    </lineage>
</organism>
<reference key="1">
    <citation type="submission" date="2012-07" db="EMBL/GenBank/DDBJ databases">
        <title>The genomic sequence of Geospiza fortis.</title>
        <authorList>
            <person name="Zhang G."/>
        </authorList>
    </citation>
    <scope>NUCLEOTIDE SEQUENCE [LARGE SCALE GENOMIC DNA]</scope>
</reference>
<reference key="2">
    <citation type="journal article" date="2015" name="Nature">
        <title>Evolution of Darwin's finches and their beaks revealed by genome sequencing.</title>
        <authorList>
            <person name="Lamichhaney S."/>
            <person name="Berglund J."/>
            <person name="Almen M.S."/>
            <person name="Maqbool K."/>
            <person name="Grabherr M."/>
            <person name="Martinez-Barrio A."/>
            <person name="Promerova M."/>
            <person name="Rubin C.J."/>
            <person name="Wang C."/>
            <person name="Zamani N."/>
            <person name="Grant B.R."/>
            <person name="Grant P.R."/>
            <person name="Webster M.T."/>
            <person name="Andersson L."/>
        </authorList>
    </citation>
    <scope>FUNCTION</scope>
    <scope>VARIANTS LEU-112 AND ILE-211</scope>
</reference>
<evidence type="ECO:0000250" key="1">
    <source>
        <dbReference type="UniProtKB" id="Q15699"/>
    </source>
</evidence>
<evidence type="ECO:0000250" key="2">
    <source>
        <dbReference type="UniProtKB" id="Q63087"/>
    </source>
</evidence>
<evidence type="ECO:0000250" key="3">
    <source>
        <dbReference type="UniProtKB" id="Q8C8B0"/>
    </source>
</evidence>
<evidence type="ECO:0000255" key="4">
    <source>
        <dbReference type="PROSITE-ProRule" id="PRU00108"/>
    </source>
</evidence>
<evidence type="ECO:0000255" key="5">
    <source>
        <dbReference type="PROSITE-ProRule" id="PRU00138"/>
    </source>
</evidence>
<evidence type="ECO:0000269" key="6">
    <source>
    </source>
</evidence>
<evidence type="ECO:0000305" key="7"/>
<gene>
    <name evidence="1" type="primary">ALX1</name>
    <name evidence="3" type="synonym">CART1</name>
</gene>